<feature type="chain" id="PRO_0000210980" description="Peptide chain release factor 3">
    <location>
        <begin position="1"/>
        <end position="529"/>
    </location>
</feature>
<feature type="domain" description="tr-type G">
    <location>
        <begin position="11"/>
        <end position="280"/>
    </location>
</feature>
<feature type="binding site" evidence="1">
    <location>
        <begin position="20"/>
        <end position="27"/>
    </location>
    <ligand>
        <name>GTP</name>
        <dbReference type="ChEBI" id="CHEBI:37565"/>
    </ligand>
</feature>
<feature type="binding site" evidence="1">
    <location>
        <begin position="88"/>
        <end position="92"/>
    </location>
    <ligand>
        <name>GTP</name>
        <dbReference type="ChEBI" id="CHEBI:37565"/>
    </ligand>
</feature>
<feature type="binding site" evidence="1">
    <location>
        <begin position="142"/>
        <end position="145"/>
    </location>
    <ligand>
        <name>GTP</name>
        <dbReference type="ChEBI" id="CHEBI:37565"/>
    </ligand>
</feature>
<dbReference type="EMBL" id="BA000031">
    <property type="protein sequence ID" value="BAC60703.1"/>
    <property type="molecule type" value="Genomic_DNA"/>
</dbReference>
<dbReference type="RefSeq" id="NP_798819.1">
    <property type="nucleotide sequence ID" value="NC_004603.1"/>
</dbReference>
<dbReference type="RefSeq" id="WP_005456063.1">
    <property type="nucleotide sequence ID" value="NC_004603.1"/>
</dbReference>
<dbReference type="SMR" id="Q87M18"/>
<dbReference type="GeneID" id="1189953"/>
<dbReference type="KEGG" id="vpa:VP2440"/>
<dbReference type="PATRIC" id="fig|223926.6.peg.2341"/>
<dbReference type="eggNOG" id="COG4108">
    <property type="taxonomic scope" value="Bacteria"/>
</dbReference>
<dbReference type="HOGENOM" id="CLU_002794_2_1_6"/>
<dbReference type="Proteomes" id="UP000002493">
    <property type="component" value="Chromosome 1"/>
</dbReference>
<dbReference type="GO" id="GO:0005829">
    <property type="term" value="C:cytosol"/>
    <property type="evidence" value="ECO:0007669"/>
    <property type="project" value="TreeGrafter"/>
</dbReference>
<dbReference type="GO" id="GO:0005525">
    <property type="term" value="F:GTP binding"/>
    <property type="evidence" value="ECO:0007669"/>
    <property type="project" value="UniProtKB-UniRule"/>
</dbReference>
<dbReference type="GO" id="GO:0003924">
    <property type="term" value="F:GTPase activity"/>
    <property type="evidence" value="ECO:0007669"/>
    <property type="project" value="InterPro"/>
</dbReference>
<dbReference type="GO" id="GO:0097216">
    <property type="term" value="F:guanosine tetraphosphate binding"/>
    <property type="evidence" value="ECO:0007669"/>
    <property type="project" value="UniProtKB-ARBA"/>
</dbReference>
<dbReference type="GO" id="GO:0016150">
    <property type="term" value="F:translation release factor activity, codon nonspecific"/>
    <property type="evidence" value="ECO:0007669"/>
    <property type="project" value="TreeGrafter"/>
</dbReference>
<dbReference type="GO" id="GO:0016149">
    <property type="term" value="F:translation release factor activity, codon specific"/>
    <property type="evidence" value="ECO:0007669"/>
    <property type="project" value="UniProtKB-UniRule"/>
</dbReference>
<dbReference type="GO" id="GO:0006449">
    <property type="term" value="P:regulation of translational termination"/>
    <property type="evidence" value="ECO:0007669"/>
    <property type="project" value="UniProtKB-UniRule"/>
</dbReference>
<dbReference type="CDD" id="cd04169">
    <property type="entry name" value="RF3"/>
    <property type="match status" value="1"/>
</dbReference>
<dbReference type="CDD" id="cd03689">
    <property type="entry name" value="RF3_II"/>
    <property type="match status" value="1"/>
</dbReference>
<dbReference type="CDD" id="cd16259">
    <property type="entry name" value="RF3_III"/>
    <property type="match status" value="1"/>
</dbReference>
<dbReference type="FunFam" id="2.40.30.10:FF:000040">
    <property type="entry name" value="Peptide chain release factor 3"/>
    <property type="match status" value="1"/>
</dbReference>
<dbReference type="FunFam" id="3.30.70.3280:FF:000001">
    <property type="entry name" value="Peptide chain release factor 3"/>
    <property type="match status" value="1"/>
</dbReference>
<dbReference type="FunFam" id="3.40.50.300:FF:000542">
    <property type="entry name" value="Peptide chain release factor 3"/>
    <property type="match status" value="1"/>
</dbReference>
<dbReference type="Gene3D" id="3.40.50.300">
    <property type="entry name" value="P-loop containing nucleotide triphosphate hydrolases"/>
    <property type="match status" value="2"/>
</dbReference>
<dbReference type="Gene3D" id="3.30.70.3280">
    <property type="entry name" value="Peptide chain release factor 3, domain III"/>
    <property type="match status" value="1"/>
</dbReference>
<dbReference type="HAMAP" id="MF_00072">
    <property type="entry name" value="Rel_fac_3"/>
    <property type="match status" value="1"/>
</dbReference>
<dbReference type="InterPro" id="IPR053905">
    <property type="entry name" value="EF-G-like_DII"/>
</dbReference>
<dbReference type="InterPro" id="IPR035647">
    <property type="entry name" value="EFG_III/V"/>
</dbReference>
<dbReference type="InterPro" id="IPR031157">
    <property type="entry name" value="G_TR_CS"/>
</dbReference>
<dbReference type="InterPro" id="IPR027417">
    <property type="entry name" value="P-loop_NTPase"/>
</dbReference>
<dbReference type="InterPro" id="IPR004548">
    <property type="entry name" value="PrfC"/>
</dbReference>
<dbReference type="InterPro" id="IPR032090">
    <property type="entry name" value="RF3_C"/>
</dbReference>
<dbReference type="InterPro" id="IPR038467">
    <property type="entry name" value="RF3_dom_3_sf"/>
</dbReference>
<dbReference type="InterPro" id="IPR041732">
    <property type="entry name" value="RF3_GTP-bd"/>
</dbReference>
<dbReference type="InterPro" id="IPR005225">
    <property type="entry name" value="Small_GTP-bd"/>
</dbReference>
<dbReference type="InterPro" id="IPR000795">
    <property type="entry name" value="T_Tr_GTP-bd_dom"/>
</dbReference>
<dbReference type="InterPro" id="IPR009000">
    <property type="entry name" value="Transl_B-barrel_sf"/>
</dbReference>
<dbReference type="NCBIfam" id="TIGR00503">
    <property type="entry name" value="prfC"/>
    <property type="match status" value="1"/>
</dbReference>
<dbReference type="NCBIfam" id="NF001964">
    <property type="entry name" value="PRK00741.1"/>
    <property type="match status" value="1"/>
</dbReference>
<dbReference type="NCBIfam" id="TIGR00231">
    <property type="entry name" value="small_GTP"/>
    <property type="match status" value="1"/>
</dbReference>
<dbReference type="PANTHER" id="PTHR43556">
    <property type="entry name" value="PEPTIDE CHAIN RELEASE FACTOR RF3"/>
    <property type="match status" value="1"/>
</dbReference>
<dbReference type="PANTHER" id="PTHR43556:SF2">
    <property type="entry name" value="PEPTIDE CHAIN RELEASE FACTOR RF3"/>
    <property type="match status" value="1"/>
</dbReference>
<dbReference type="Pfam" id="PF22042">
    <property type="entry name" value="EF-G_D2"/>
    <property type="match status" value="1"/>
</dbReference>
<dbReference type="Pfam" id="PF00009">
    <property type="entry name" value="GTP_EFTU"/>
    <property type="match status" value="1"/>
</dbReference>
<dbReference type="Pfam" id="PF16658">
    <property type="entry name" value="RF3_C"/>
    <property type="match status" value="1"/>
</dbReference>
<dbReference type="PRINTS" id="PR00315">
    <property type="entry name" value="ELONGATNFCT"/>
</dbReference>
<dbReference type="SUPFAM" id="SSF54980">
    <property type="entry name" value="EF-G C-terminal domain-like"/>
    <property type="match status" value="1"/>
</dbReference>
<dbReference type="SUPFAM" id="SSF52540">
    <property type="entry name" value="P-loop containing nucleoside triphosphate hydrolases"/>
    <property type="match status" value="1"/>
</dbReference>
<dbReference type="SUPFAM" id="SSF50447">
    <property type="entry name" value="Translation proteins"/>
    <property type="match status" value="1"/>
</dbReference>
<dbReference type="PROSITE" id="PS00301">
    <property type="entry name" value="G_TR_1"/>
    <property type="match status" value="1"/>
</dbReference>
<dbReference type="PROSITE" id="PS51722">
    <property type="entry name" value="G_TR_2"/>
    <property type="match status" value="1"/>
</dbReference>
<sequence length="529" mass="59245">MSNTPFLSEVSKRRTFAIISHPDAGKTTITEKVLLFGNAIQKAGTVKGRGNAQHAKSDWMEMEKERGISVTTSVMQFPYNDCLVNLLDTPGHEDFSEDTYRTLTAVDSCLMVIDAAKGVEDRTRKLMEVTRLRDTPIVTFMNKLDRDVRDPMEVLDEVENELGMMCAPITWPIGCGKEFKGVYHIHRDETILYESGHGHEIQEVRIIKGLDNPELDEKVGESLAASVREELELVMGACPEFDKELFLTGELTPVYFGTALGNFGVDHMLDGLTEWAPAPKTRQAVERDVEATEDKFSGFVFKIQANMDPKHRDRIAFMRIVSGTYTQGMKMNHVRLGKQVSISDAVTFMAGDRSRAEHAYAGDIIGLHNHGTIQIGDTFTQGESLKFSGIPNFAPELFRRIRLKDPLKQKQLLKGLVQLSEEGAVQVFRPLQNNDLIVGAVGVLQFDVVVARLKSEYNVEAIYEGVNVATARWVECGDAKKLDEFQRKNQANLALDGGDNLTYIAPTMVNLNLAKERFPDVEFRATREH</sequence>
<proteinExistence type="inferred from homology"/>
<evidence type="ECO:0000255" key="1">
    <source>
        <dbReference type="HAMAP-Rule" id="MF_00072"/>
    </source>
</evidence>
<comment type="function">
    <text evidence="1">Increases the formation of ribosomal termination complexes and stimulates activities of RF-1 and RF-2. It binds guanine nucleotides and has strong preference for UGA stop codons. It may interact directly with the ribosome. The stimulation of RF-1 and RF-2 is significantly reduced by GTP and GDP, but not by GMP.</text>
</comment>
<comment type="subcellular location">
    <subcellularLocation>
        <location evidence="1">Cytoplasm</location>
    </subcellularLocation>
</comment>
<comment type="similarity">
    <text evidence="1">Belongs to the TRAFAC class translation factor GTPase superfamily. Classic translation factor GTPase family. PrfC subfamily.</text>
</comment>
<gene>
    <name evidence="1" type="primary">prfC</name>
    <name type="ordered locus">VP2440</name>
</gene>
<protein>
    <recommendedName>
        <fullName evidence="1">Peptide chain release factor 3</fullName>
        <shortName evidence="1">RF-3</shortName>
    </recommendedName>
</protein>
<organism>
    <name type="scientific">Vibrio parahaemolyticus serotype O3:K6 (strain RIMD 2210633)</name>
    <dbReference type="NCBI Taxonomy" id="223926"/>
    <lineage>
        <taxon>Bacteria</taxon>
        <taxon>Pseudomonadati</taxon>
        <taxon>Pseudomonadota</taxon>
        <taxon>Gammaproteobacteria</taxon>
        <taxon>Vibrionales</taxon>
        <taxon>Vibrionaceae</taxon>
        <taxon>Vibrio</taxon>
    </lineage>
</organism>
<reference key="1">
    <citation type="journal article" date="2003" name="Lancet">
        <title>Genome sequence of Vibrio parahaemolyticus: a pathogenic mechanism distinct from that of V. cholerae.</title>
        <authorList>
            <person name="Makino K."/>
            <person name="Oshima K."/>
            <person name="Kurokawa K."/>
            <person name="Yokoyama K."/>
            <person name="Uda T."/>
            <person name="Tagomori K."/>
            <person name="Iijima Y."/>
            <person name="Najima M."/>
            <person name="Nakano M."/>
            <person name="Yamashita A."/>
            <person name="Kubota Y."/>
            <person name="Kimura S."/>
            <person name="Yasunaga T."/>
            <person name="Honda T."/>
            <person name="Shinagawa H."/>
            <person name="Hattori M."/>
            <person name="Iida T."/>
        </authorList>
    </citation>
    <scope>NUCLEOTIDE SEQUENCE [LARGE SCALE GENOMIC DNA]</scope>
    <source>
        <strain>RIMD 2210633</strain>
    </source>
</reference>
<keyword id="KW-0963">Cytoplasm</keyword>
<keyword id="KW-0342">GTP-binding</keyword>
<keyword id="KW-0547">Nucleotide-binding</keyword>
<keyword id="KW-0648">Protein biosynthesis</keyword>
<accession>Q87M18</accession>
<name>RF3_VIBPA</name>